<gene>
    <name evidence="1" type="primary">epmA</name>
    <name type="synonym">yjeA</name>
    <name type="ordered locus">SFV_4314</name>
</gene>
<evidence type="ECO:0000255" key="1">
    <source>
        <dbReference type="HAMAP-Rule" id="MF_00174"/>
    </source>
</evidence>
<protein>
    <recommendedName>
        <fullName evidence="1">Elongation factor P--(R)-beta-lysine ligase</fullName>
        <shortName evidence="1">EF-P--(R)-beta-lysine ligase</shortName>
        <ecNumber evidence="1">6.3.2.-</ecNumber>
    </recommendedName>
    <alternativeName>
        <fullName evidence="1">EF-P post-translational modification enzyme A</fullName>
    </alternativeName>
    <alternativeName>
        <fullName evidence="1">EF-P-lysine lysyltransferase</fullName>
    </alternativeName>
</protein>
<accession>Q0SXC1</accession>
<reference key="1">
    <citation type="journal article" date="2006" name="BMC Genomics">
        <title>Complete genome sequence of Shigella flexneri 5b and comparison with Shigella flexneri 2a.</title>
        <authorList>
            <person name="Nie H."/>
            <person name="Yang F."/>
            <person name="Zhang X."/>
            <person name="Yang J."/>
            <person name="Chen L."/>
            <person name="Wang J."/>
            <person name="Xiong Z."/>
            <person name="Peng J."/>
            <person name="Sun L."/>
            <person name="Dong J."/>
            <person name="Xue Y."/>
            <person name="Xu X."/>
            <person name="Chen S."/>
            <person name="Yao Z."/>
            <person name="Shen Y."/>
            <person name="Jin Q."/>
        </authorList>
    </citation>
    <scope>NUCLEOTIDE SEQUENCE [LARGE SCALE GENOMIC DNA]</scope>
    <source>
        <strain>8401</strain>
    </source>
</reference>
<organism>
    <name type="scientific">Shigella flexneri serotype 5b (strain 8401)</name>
    <dbReference type="NCBI Taxonomy" id="373384"/>
    <lineage>
        <taxon>Bacteria</taxon>
        <taxon>Pseudomonadati</taxon>
        <taxon>Pseudomonadota</taxon>
        <taxon>Gammaproteobacteria</taxon>
        <taxon>Enterobacterales</taxon>
        <taxon>Enterobacteriaceae</taxon>
        <taxon>Shigella</taxon>
    </lineage>
</organism>
<comment type="function">
    <text evidence="1">With EpmB is involved in the beta-lysylation step of the post-translational modification of translation elongation factor P (EF-P) on 'Lys-34'. Catalyzes the ATP-dependent activation of (R)-beta-lysine produced by EpmB, forming a lysyl-adenylate, from which the beta-lysyl moiety is then transferred to the epsilon-amino group of EF-P 'Lys-34'.</text>
</comment>
<comment type="catalytic activity">
    <reaction evidence="1">
        <text>D-beta-lysine + L-lysyl-[protein] + ATP = N(6)-((3R)-3,6-diaminohexanoyl)-L-lysyl-[protein] + AMP + diphosphate + H(+)</text>
        <dbReference type="Rhea" id="RHEA:83435"/>
        <dbReference type="Rhea" id="RHEA-COMP:9752"/>
        <dbReference type="Rhea" id="RHEA-COMP:20131"/>
        <dbReference type="ChEBI" id="CHEBI:15378"/>
        <dbReference type="ChEBI" id="CHEBI:29969"/>
        <dbReference type="ChEBI" id="CHEBI:30616"/>
        <dbReference type="ChEBI" id="CHEBI:33019"/>
        <dbReference type="ChEBI" id="CHEBI:84138"/>
        <dbReference type="ChEBI" id="CHEBI:156053"/>
        <dbReference type="ChEBI" id="CHEBI:456215"/>
    </reaction>
    <physiologicalReaction direction="left-to-right" evidence="1">
        <dbReference type="Rhea" id="RHEA:83436"/>
    </physiologicalReaction>
</comment>
<comment type="subunit">
    <text evidence="1">Homodimer.</text>
</comment>
<comment type="similarity">
    <text evidence="1">Belongs to the class-II aminoacyl-tRNA synthetase family. EpmA subfamily.</text>
</comment>
<proteinExistence type="inferred from homology"/>
<name>EPMA_SHIF8</name>
<sequence>MSETASWQPSASIPNLLKRAAIMAEIRRFFADRGVLEVETPCMSQATVTDIHLVPFETRFVGPGHSQGMNLWLMTSPEYHMKRLLVAGCGPVFQLCRSFRNEEMGRYHNPEFTMLEWYRPHYDMYRLMNEVDDLLQQVLDCPAAESLSYQQAFLRYLEIDPLSADKTQLREVAAKLDLSNVADTEEDRDTLLQLLFTFGVEPNIGKEKPTFVYHFPASQASLAQISTEDHRVAERFEVYYKGIELANGFHELTDAREQQQRFEQDNRKRAARGLPQHPIDQNLIEALKVGMPDCSGVALGVDRLVMLALGAETLAEVIAFSVDRA</sequence>
<dbReference type="EC" id="6.3.2.-" evidence="1"/>
<dbReference type="EMBL" id="CP000266">
    <property type="protein sequence ID" value="ABF06294.1"/>
    <property type="molecule type" value="Genomic_DNA"/>
</dbReference>
<dbReference type="RefSeq" id="WP_000004771.1">
    <property type="nucleotide sequence ID" value="NC_008258.1"/>
</dbReference>
<dbReference type="SMR" id="Q0SXC1"/>
<dbReference type="GeneID" id="93777667"/>
<dbReference type="KEGG" id="sfv:SFV_4314"/>
<dbReference type="HOGENOM" id="CLU_008255_1_1_6"/>
<dbReference type="Proteomes" id="UP000000659">
    <property type="component" value="Chromosome"/>
</dbReference>
<dbReference type="GO" id="GO:0005829">
    <property type="term" value="C:cytosol"/>
    <property type="evidence" value="ECO:0007669"/>
    <property type="project" value="TreeGrafter"/>
</dbReference>
<dbReference type="GO" id="GO:0016880">
    <property type="term" value="F:acid-ammonia (or amide) ligase activity"/>
    <property type="evidence" value="ECO:0007669"/>
    <property type="project" value="UniProtKB-UniRule"/>
</dbReference>
<dbReference type="GO" id="GO:0005524">
    <property type="term" value="F:ATP binding"/>
    <property type="evidence" value="ECO:0007669"/>
    <property type="project" value="UniProtKB-UniRule"/>
</dbReference>
<dbReference type="GO" id="GO:0004824">
    <property type="term" value="F:lysine-tRNA ligase activity"/>
    <property type="evidence" value="ECO:0007669"/>
    <property type="project" value="InterPro"/>
</dbReference>
<dbReference type="GO" id="GO:0000049">
    <property type="term" value="F:tRNA binding"/>
    <property type="evidence" value="ECO:0007669"/>
    <property type="project" value="TreeGrafter"/>
</dbReference>
<dbReference type="GO" id="GO:0006430">
    <property type="term" value="P:lysyl-tRNA aminoacylation"/>
    <property type="evidence" value="ECO:0007669"/>
    <property type="project" value="InterPro"/>
</dbReference>
<dbReference type="FunFam" id="3.30.930.10:FF:000017">
    <property type="entry name" value="Elongation factor P--(R)-beta-lysine ligase"/>
    <property type="match status" value="1"/>
</dbReference>
<dbReference type="Gene3D" id="3.30.930.10">
    <property type="entry name" value="Bira Bifunctional Protein, Domain 2"/>
    <property type="match status" value="1"/>
</dbReference>
<dbReference type="HAMAP" id="MF_00174">
    <property type="entry name" value="EF_P_modif_A"/>
    <property type="match status" value="1"/>
</dbReference>
<dbReference type="InterPro" id="IPR004364">
    <property type="entry name" value="Aa-tRNA-synt_II"/>
</dbReference>
<dbReference type="InterPro" id="IPR006195">
    <property type="entry name" value="aa-tRNA-synth_II"/>
</dbReference>
<dbReference type="InterPro" id="IPR045864">
    <property type="entry name" value="aa-tRNA-synth_II/BPL/LPL"/>
</dbReference>
<dbReference type="InterPro" id="IPR004525">
    <property type="entry name" value="EpmA"/>
</dbReference>
<dbReference type="InterPro" id="IPR018149">
    <property type="entry name" value="Lys-tRNA-synth_II_C"/>
</dbReference>
<dbReference type="NCBIfam" id="TIGR00462">
    <property type="entry name" value="genX"/>
    <property type="match status" value="1"/>
</dbReference>
<dbReference type="NCBIfam" id="NF006828">
    <property type="entry name" value="PRK09350.1"/>
    <property type="match status" value="1"/>
</dbReference>
<dbReference type="PANTHER" id="PTHR42918:SF6">
    <property type="entry name" value="ELONGATION FACTOR P--(R)-BETA-LYSINE LIGASE"/>
    <property type="match status" value="1"/>
</dbReference>
<dbReference type="PANTHER" id="PTHR42918">
    <property type="entry name" value="LYSYL-TRNA SYNTHETASE"/>
    <property type="match status" value="1"/>
</dbReference>
<dbReference type="Pfam" id="PF00152">
    <property type="entry name" value="tRNA-synt_2"/>
    <property type="match status" value="1"/>
</dbReference>
<dbReference type="PRINTS" id="PR00982">
    <property type="entry name" value="TRNASYNTHLYS"/>
</dbReference>
<dbReference type="SUPFAM" id="SSF55681">
    <property type="entry name" value="Class II aaRS and biotin synthetases"/>
    <property type="match status" value="1"/>
</dbReference>
<dbReference type="PROSITE" id="PS50862">
    <property type="entry name" value="AA_TRNA_LIGASE_II"/>
    <property type="match status" value="1"/>
</dbReference>
<keyword id="KW-0067">ATP-binding</keyword>
<keyword id="KW-0436">Ligase</keyword>
<keyword id="KW-0547">Nucleotide-binding</keyword>
<feature type="chain" id="PRO_1000023631" description="Elongation factor P--(R)-beta-lysine ligase">
    <location>
        <begin position="1"/>
        <end position="325"/>
    </location>
</feature>
<feature type="binding site" evidence="1">
    <location>
        <begin position="76"/>
        <end position="78"/>
    </location>
    <ligand>
        <name>substrate</name>
    </ligand>
</feature>
<feature type="binding site" evidence="1">
    <location>
        <begin position="100"/>
        <end position="102"/>
    </location>
    <ligand>
        <name>ATP</name>
        <dbReference type="ChEBI" id="CHEBI:30616"/>
    </ligand>
</feature>
<feature type="binding site" evidence="1">
    <location>
        <position position="109"/>
    </location>
    <ligand>
        <name>ATP</name>
        <dbReference type="ChEBI" id="CHEBI:30616"/>
    </ligand>
</feature>
<feature type="binding site" evidence="1">
    <location>
        <position position="118"/>
    </location>
    <ligand>
        <name>substrate</name>
    </ligand>
</feature>
<feature type="binding site" evidence="1">
    <location>
        <begin position="244"/>
        <end position="245"/>
    </location>
    <ligand>
        <name>ATP</name>
        <dbReference type="ChEBI" id="CHEBI:30616"/>
    </ligand>
</feature>
<feature type="binding site" evidence="1">
    <location>
        <position position="251"/>
    </location>
    <ligand>
        <name>substrate</name>
    </ligand>
</feature>
<feature type="binding site" evidence="1">
    <location>
        <position position="300"/>
    </location>
    <ligand>
        <name>ATP</name>
        <dbReference type="ChEBI" id="CHEBI:30616"/>
    </ligand>
</feature>